<dbReference type="EMBL" id="DS027054">
    <property type="protein sequence ID" value="EAW10446.1"/>
    <property type="molecule type" value="Genomic_DNA"/>
</dbReference>
<dbReference type="RefSeq" id="XP_001271872.1">
    <property type="nucleotide sequence ID" value="XM_001271871.1"/>
</dbReference>
<dbReference type="SMR" id="A1CHU1"/>
<dbReference type="STRING" id="344612.A1CHU1"/>
<dbReference type="EnsemblFungi" id="EAW10446">
    <property type="protein sequence ID" value="EAW10446"/>
    <property type="gene ID" value="ACLA_049180"/>
</dbReference>
<dbReference type="GeneID" id="4704031"/>
<dbReference type="KEGG" id="act:ACLA_049180"/>
<dbReference type="VEuPathDB" id="FungiDB:ACLA_049180"/>
<dbReference type="eggNOG" id="ENOG502QT3W">
    <property type="taxonomic scope" value="Eukaryota"/>
</dbReference>
<dbReference type="HOGENOM" id="CLU_036502_1_0_1"/>
<dbReference type="OMA" id="VFRAWSG"/>
<dbReference type="OrthoDB" id="17927at2759"/>
<dbReference type="Proteomes" id="UP000006701">
    <property type="component" value="Unassembled WGS sequence"/>
</dbReference>
<dbReference type="GO" id="GO:0032865">
    <property type="term" value="C:ERMES complex"/>
    <property type="evidence" value="ECO:0007669"/>
    <property type="project" value="UniProtKB-UniRule"/>
</dbReference>
<dbReference type="GO" id="GO:0008289">
    <property type="term" value="F:lipid binding"/>
    <property type="evidence" value="ECO:0007669"/>
    <property type="project" value="UniProtKB-KW"/>
</dbReference>
<dbReference type="GO" id="GO:0000002">
    <property type="term" value="P:mitochondrial genome maintenance"/>
    <property type="evidence" value="ECO:0007669"/>
    <property type="project" value="UniProtKB-UniRule"/>
</dbReference>
<dbReference type="GO" id="GO:1990456">
    <property type="term" value="P:mitochondrion-endoplasmic reticulum membrane tethering"/>
    <property type="evidence" value="ECO:0007669"/>
    <property type="project" value="TreeGrafter"/>
</dbReference>
<dbReference type="GO" id="GO:0015914">
    <property type="term" value="P:phospholipid transport"/>
    <property type="evidence" value="ECO:0007669"/>
    <property type="project" value="TreeGrafter"/>
</dbReference>
<dbReference type="CDD" id="cd21673">
    <property type="entry name" value="SMP_Mdm34"/>
    <property type="match status" value="1"/>
</dbReference>
<dbReference type="HAMAP" id="MF_03105">
    <property type="entry name" value="Mdm34"/>
    <property type="match status" value="1"/>
</dbReference>
<dbReference type="InterPro" id="IPR027536">
    <property type="entry name" value="Mdm34"/>
</dbReference>
<dbReference type="InterPro" id="IPR031468">
    <property type="entry name" value="SMP_LBD"/>
</dbReference>
<dbReference type="PANTHER" id="PTHR28185">
    <property type="entry name" value="MITOCHONDRIAL DISTRIBUTION AND MORPHOLOGY PROTEIN 34"/>
    <property type="match status" value="1"/>
</dbReference>
<dbReference type="PANTHER" id="PTHR28185:SF1">
    <property type="entry name" value="MITOCHONDRIAL DISTRIBUTION AND MORPHOLOGY PROTEIN 34"/>
    <property type="match status" value="1"/>
</dbReference>
<dbReference type="PROSITE" id="PS51847">
    <property type="entry name" value="SMP"/>
    <property type="match status" value="1"/>
</dbReference>
<name>MDM34_ASPCL</name>
<keyword id="KW-0445">Lipid transport</keyword>
<keyword id="KW-0446">Lipid-binding</keyword>
<keyword id="KW-0472">Membrane</keyword>
<keyword id="KW-0496">Mitochondrion</keyword>
<keyword id="KW-1000">Mitochondrion outer membrane</keyword>
<keyword id="KW-1185">Reference proteome</keyword>
<keyword id="KW-0812">Transmembrane</keyword>
<keyword id="KW-1134">Transmembrane beta strand</keyword>
<keyword id="KW-0813">Transport</keyword>
<accession>A1CHU1</accession>
<gene>
    <name evidence="1" type="primary">mdm34</name>
    <name type="ORF">ACLA_049180</name>
</gene>
<evidence type="ECO:0000255" key="1">
    <source>
        <dbReference type="HAMAP-Rule" id="MF_03105"/>
    </source>
</evidence>
<evidence type="ECO:0000256" key="2">
    <source>
        <dbReference type="SAM" id="MobiDB-lite"/>
    </source>
</evidence>
<protein>
    <recommendedName>
        <fullName evidence="1">Mitochondrial distribution and morphology protein 34</fullName>
    </recommendedName>
</protein>
<sequence length="572" mass="62578">MAFNFNWSPLMADASFYTRAQDLLTAALNKSPKPPIIVDDIIVTELNLGSIPPELEILEIGDLAEDRFRGIFKMSYSGDAFLTLKTRVQANPLNTYLLTRPSFATPLPLAAATPLTIPLQITLSDIKLSGFVILVFSKQKGITVVFRNDPLESLKVSSTFDSIPFVRDFLQKEIEAQLRILFMDELPAIIHRLSLRLWVPEYRAGEDFETQAEKAETANGEGPGQDPLASPPQDPVDALGHALDESDIASLSLDSSVEAHSLFSQKNLLRLAALTDSQRTLSLFTPSIREVVYRAWTSPTDQTDAAGSVTSPVLSRTHSQVGSMSSFQDSASIASMQTRSSTPSHTFSGYGLSLGAGRHSKAHSRKRKKRVVDLRRPKTTDDAPSVSDESAFTESTSAPSVCSAPLPILNEQSDDPVTPPLSPDNDLHLPIIPDRHRMSISRPAPRRDIAAEMMRDMGGPSSTSDPATQATQSEDTSATPRATMRAQIPSIYLNEKQDAGSSTGVPRQLPSAILPFLNDNPMNRVVDQALVERLAGEIARRMRDEKFMATNACGSFWDRHSQEESPPPAYGH</sequence>
<comment type="function">
    <text evidence="1">Component of the ERMES/MDM complex, which serves as a molecular tether to connect the endoplasmic reticulum (ER) and mitochondria. Components of this complex are involved in the control of mitochondrial shape and protein biogenesis, and function in nonvesicular lipid trafficking between the ER and mitochondria. Mdm34 is required for the interaction of the ER-resident membrane protein mmm1 and the outer mitochondrial membrane-resident beta-barrel protein mdm10.</text>
</comment>
<comment type="subunit">
    <text evidence="1">Component of the ER-mitochondria encounter structure (ERMES) or MDM complex, composed of mmm1, mdm10, mdm12 and mdm34.</text>
</comment>
<comment type="subcellular location">
    <subcellularLocation>
        <location evidence="1">Mitochondrion outer membrane</location>
        <topology evidence="1">Multi-pass membrane protein</topology>
    </subcellularLocation>
    <text evidence="1">The ERMES/MDM complex localizes to a few discrete foci (around 10 per single cell), that represent mitochondria-endoplasmic reticulum junctions. These foci are often found next to mtDNA nucleoids.</text>
</comment>
<comment type="domain">
    <text evidence="1">Lacks alpha-helical transmembrane segments, suggesting that it resides in the membrane via beta-sheet conformations similar to those predicted for other outer membrane proteins and porin.</text>
</comment>
<comment type="domain">
    <text evidence="1">The SMP-LTD domain is a barrel-like domain that can bind various types of glycerophospholipids in its interior and mediate their transfer between two adjacent bilayers.</text>
</comment>
<comment type="similarity">
    <text evidence="1">Belongs to the MDM34 family.</text>
</comment>
<feature type="chain" id="PRO_0000384324" description="Mitochondrial distribution and morphology protein 34">
    <location>
        <begin position="1"/>
        <end position="572"/>
    </location>
</feature>
<feature type="domain" description="SMP-LTD" evidence="1">
    <location>
        <begin position="1"/>
        <end position="195"/>
    </location>
</feature>
<feature type="region of interest" description="Disordered" evidence="2">
    <location>
        <begin position="210"/>
        <end position="239"/>
    </location>
</feature>
<feature type="region of interest" description="Disordered" evidence="2">
    <location>
        <begin position="330"/>
        <end position="423"/>
    </location>
</feature>
<feature type="region of interest" description="Disordered" evidence="2">
    <location>
        <begin position="455"/>
        <end position="482"/>
    </location>
</feature>
<feature type="compositionally biased region" description="Polar residues" evidence="2">
    <location>
        <begin position="330"/>
        <end position="347"/>
    </location>
</feature>
<feature type="compositionally biased region" description="Basic residues" evidence="2">
    <location>
        <begin position="358"/>
        <end position="370"/>
    </location>
</feature>
<feature type="compositionally biased region" description="Basic and acidic residues" evidence="2">
    <location>
        <begin position="371"/>
        <end position="381"/>
    </location>
</feature>
<feature type="compositionally biased region" description="Polar residues" evidence="2">
    <location>
        <begin position="387"/>
        <end position="400"/>
    </location>
</feature>
<feature type="compositionally biased region" description="Polar residues" evidence="2">
    <location>
        <begin position="460"/>
        <end position="480"/>
    </location>
</feature>
<organism>
    <name type="scientific">Aspergillus clavatus (strain ATCC 1007 / CBS 513.65 / DSM 816 / NCTC 3887 / NRRL 1 / QM 1276 / 107)</name>
    <dbReference type="NCBI Taxonomy" id="344612"/>
    <lineage>
        <taxon>Eukaryota</taxon>
        <taxon>Fungi</taxon>
        <taxon>Dikarya</taxon>
        <taxon>Ascomycota</taxon>
        <taxon>Pezizomycotina</taxon>
        <taxon>Eurotiomycetes</taxon>
        <taxon>Eurotiomycetidae</taxon>
        <taxon>Eurotiales</taxon>
        <taxon>Aspergillaceae</taxon>
        <taxon>Aspergillus</taxon>
        <taxon>Aspergillus subgen. Fumigati</taxon>
    </lineage>
</organism>
<proteinExistence type="inferred from homology"/>
<reference key="1">
    <citation type="journal article" date="2008" name="PLoS Genet.">
        <title>Genomic islands in the pathogenic filamentous fungus Aspergillus fumigatus.</title>
        <authorList>
            <person name="Fedorova N.D."/>
            <person name="Khaldi N."/>
            <person name="Joardar V.S."/>
            <person name="Maiti R."/>
            <person name="Amedeo P."/>
            <person name="Anderson M.J."/>
            <person name="Crabtree J."/>
            <person name="Silva J.C."/>
            <person name="Badger J.H."/>
            <person name="Albarraq A."/>
            <person name="Angiuoli S."/>
            <person name="Bussey H."/>
            <person name="Bowyer P."/>
            <person name="Cotty P.J."/>
            <person name="Dyer P.S."/>
            <person name="Egan A."/>
            <person name="Galens K."/>
            <person name="Fraser-Liggett C.M."/>
            <person name="Haas B.J."/>
            <person name="Inman J.M."/>
            <person name="Kent R."/>
            <person name="Lemieux S."/>
            <person name="Malavazi I."/>
            <person name="Orvis J."/>
            <person name="Roemer T."/>
            <person name="Ronning C.M."/>
            <person name="Sundaram J.P."/>
            <person name="Sutton G."/>
            <person name="Turner G."/>
            <person name="Venter J.C."/>
            <person name="White O.R."/>
            <person name="Whitty B.R."/>
            <person name="Youngman P."/>
            <person name="Wolfe K.H."/>
            <person name="Goldman G.H."/>
            <person name="Wortman J.R."/>
            <person name="Jiang B."/>
            <person name="Denning D.W."/>
            <person name="Nierman W.C."/>
        </authorList>
    </citation>
    <scope>NUCLEOTIDE SEQUENCE [LARGE SCALE GENOMIC DNA]</scope>
    <source>
        <strain>ATCC 1007 / CBS 513.65 / DSM 816 / NCTC 3887 / NRRL 1 / QM 1276 / 107</strain>
    </source>
</reference>